<sequence length="44" mass="5067">MKRTFQPSTIKRARTHGFRARMATKNGRAVLSRRRAKGRARLAV</sequence>
<feature type="chain" id="PRO_1000205835" description="Large ribosomal subunit protein bL34">
    <location>
        <begin position="1"/>
        <end position="44"/>
    </location>
</feature>
<evidence type="ECO:0000255" key="1">
    <source>
        <dbReference type="HAMAP-Rule" id="MF_00391"/>
    </source>
</evidence>
<evidence type="ECO:0000305" key="2"/>
<organism>
    <name type="scientific">Pseudomonas fluorescens (strain SBW25)</name>
    <dbReference type="NCBI Taxonomy" id="216595"/>
    <lineage>
        <taxon>Bacteria</taxon>
        <taxon>Pseudomonadati</taxon>
        <taxon>Pseudomonadota</taxon>
        <taxon>Gammaproteobacteria</taxon>
        <taxon>Pseudomonadales</taxon>
        <taxon>Pseudomonadaceae</taxon>
        <taxon>Pseudomonas</taxon>
    </lineage>
</organism>
<accession>C3K1G4</accession>
<reference key="1">
    <citation type="journal article" date="2009" name="Genome Biol.">
        <title>Genomic and genetic analyses of diversity and plant interactions of Pseudomonas fluorescens.</title>
        <authorList>
            <person name="Silby M.W."/>
            <person name="Cerdeno-Tarraga A.M."/>
            <person name="Vernikos G.S."/>
            <person name="Giddens S.R."/>
            <person name="Jackson R.W."/>
            <person name="Preston G.M."/>
            <person name="Zhang X.-X."/>
            <person name="Moon C.D."/>
            <person name="Gehrig S.M."/>
            <person name="Godfrey S.A.C."/>
            <person name="Knight C.G."/>
            <person name="Malone J.G."/>
            <person name="Robinson Z."/>
            <person name="Spiers A.J."/>
            <person name="Harris S."/>
            <person name="Challis G.L."/>
            <person name="Yaxley A.M."/>
            <person name="Harris D."/>
            <person name="Seeger K."/>
            <person name="Murphy L."/>
            <person name="Rutter S."/>
            <person name="Squares R."/>
            <person name="Quail M.A."/>
            <person name="Saunders E."/>
            <person name="Mavromatis K."/>
            <person name="Brettin T.S."/>
            <person name="Bentley S.D."/>
            <person name="Hothersall J."/>
            <person name="Stephens E."/>
            <person name="Thomas C.M."/>
            <person name="Parkhill J."/>
            <person name="Levy S.B."/>
            <person name="Rainey P.B."/>
            <person name="Thomson N.R."/>
        </authorList>
    </citation>
    <scope>NUCLEOTIDE SEQUENCE [LARGE SCALE GENOMIC DNA]</scope>
    <source>
        <strain>SBW25</strain>
    </source>
</reference>
<proteinExistence type="inferred from homology"/>
<protein>
    <recommendedName>
        <fullName evidence="1">Large ribosomal subunit protein bL34</fullName>
    </recommendedName>
    <alternativeName>
        <fullName evidence="2">50S ribosomal protein L34</fullName>
    </alternativeName>
</protein>
<name>RL34_PSEFS</name>
<comment type="similarity">
    <text evidence="1">Belongs to the bacterial ribosomal protein bL34 family.</text>
</comment>
<dbReference type="EMBL" id="AM181176">
    <property type="protein sequence ID" value="CAY53753.1"/>
    <property type="molecule type" value="Genomic_DNA"/>
</dbReference>
<dbReference type="RefSeq" id="WP_003213577.1">
    <property type="nucleotide sequence ID" value="NC_012660.1"/>
</dbReference>
<dbReference type="SMR" id="C3K1G4"/>
<dbReference type="GeneID" id="98108529"/>
<dbReference type="eggNOG" id="COG0230">
    <property type="taxonomic scope" value="Bacteria"/>
</dbReference>
<dbReference type="HOGENOM" id="CLU_129938_2_0_6"/>
<dbReference type="OrthoDB" id="9804164at2"/>
<dbReference type="GO" id="GO:1990904">
    <property type="term" value="C:ribonucleoprotein complex"/>
    <property type="evidence" value="ECO:0007669"/>
    <property type="project" value="UniProtKB-KW"/>
</dbReference>
<dbReference type="GO" id="GO:0005840">
    <property type="term" value="C:ribosome"/>
    <property type="evidence" value="ECO:0007669"/>
    <property type="project" value="UniProtKB-KW"/>
</dbReference>
<dbReference type="GO" id="GO:0003735">
    <property type="term" value="F:structural constituent of ribosome"/>
    <property type="evidence" value="ECO:0007669"/>
    <property type="project" value="InterPro"/>
</dbReference>
<dbReference type="GO" id="GO:0006412">
    <property type="term" value="P:translation"/>
    <property type="evidence" value="ECO:0007669"/>
    <property type="project" value="UniProtKB-UniRule"/>
</dbReference>
<dbReference type="FunFam" id="1.10.287.3980:FF:000001">
    <property type="entry name" value="Mitochondrial ribosomal protein L34"/>
    <property type="match status" value="1"/>
</dbReference>
<dbReference type="Gene3D" id="1.10.287.3980">
    <property type="match status" value="1"/>
</dbReference>
<dbReference type="HAMAP" id="MF_00391">
    <property type="entry name" value="Ribosomal_bL34"/>
    <property type="match status" value="1"/>
</dbReference>
<dbReference type="InterPro" id="IPR000271">
    <property type="entry name" value="Ribosomal_bL34"/>
</dbReference>
<dbReference type="InterPro" id="IPR020939">
    <property type="entry name" value="Ribosomal_bL34_CS"/>
</dbReference>
<dbReference type="NCBIfam" id="TIGR01030">
    <property type="entry name" value="rpmH_bact"/>
    <property type="match status" value="1"/>
</dbReference>
<dbReference type="PANTHER" id="PTHR14503:SF4">
    <property type="entry name" value="LARGE RIBOSOMAL SUBUNIT PROTEIN BL34M"/>
    <property type="match status" value="1"/>
</dbReference>
<dbReference type="PANTHER" id="PTHR14503">
    <property type="entry name" value="MITOCHONDRIAL RIBOSOMAL PROTEIN 34 FAMILY MEMBER"/>
    <property type="match status" value="1"/>
</dbReference>
<dbReference type="Pfam" id="PF00468">
    <property type="entry name" value="Ribosomal_L34"/>
    <property type="match status" value="1"/>
</dbReference>
<dbReference type="PROSITE" id="PS00784">
    <property type="entry name" value="RIBOSOMAL_L34"/>
    <property type="match status" value="1"/>
</dbReference>
<keyword id="KW-0687">Ribonucleoprotein</keyword>
<keyword id="KW-0689">Ribosomal protein</keyword>
<gene>
    <name evidence="1" type="primary">rpmH</name>
    <name type="ordered locus">PFLU_6136</name>
</gene>